<accession>Q9FLJ2</accession>
<accession>Q8LF13</accession>
<protein>
    <recommendedName>
        <fullName evidence="6">NAC domain-containing protein 100</fullName>
        <shortName evidence="6">ANAC100</shortName>
        <shortName>AtNAC5</shortName>
    </recommendedName>
</protein>
<reference key="1">
    <citation type="journal article" date="1998" name="DNA Res.">
        <title>Structural analysis of Arabidopsis thaliana chromosome 5. IV. Sequence features of the regions of 1,456,315 bp covered by nineteen physically assigned P1 and TAC clones.</title>
        <authorList>
            <person name="Sato S."/>
            <person name="Kaneko T."/>
            <person name="Kotani H."/>
            <person name="Nakamura Y."/>
            <person name="Asamizu E."/>
            <person name="Miyajima N."/>
            <person name="Tabata S."/>
        </authorList>
    </citation>
    <scope>NUCLEOTIDE SEQUENCE [LARGE SCALE GENOMIC DNA]</scope>
    <source>
        <strain>cv. Columbia</strain>
    </source>
</reference>
<reference key="2">
    <citation type="journal article" date="2017" name="Plant J.">
        <title>Araport11: a complete reannotation of the Arabidopsis thaliana reference genome.</title>
        <authorList>
            <person name="Cheng C.Y."/>
            <person name="Krishnakumar V."/>
            <person name="Chan A.P."/>
            <person name="Thibaud-Nissen F."/>
            <person name="Schobel S."/>
            <person name="Town C.D."/>
        </authorList>
    </citation>
    <scope>GENOME REANNOTATION</scope>
    <source>
        <strain>cv. Columbia</strain>
    </source>
</reference>
<reference key="3">
    <citation type="journal article" date="2003" name="Science">
        <title>Empirical analysis of transcriptional activity in the Arabidopsis genome.</title>
        <authorList>
            <person name="Yamada K."/>
            <person name="Lim J."/>
            <person name="Dale J.M."/>
            <person name="Chen H."/>
            <person name="Shinn P."/>
            <person name="Palm C.J."/>
            <person name="Southwick A.M."/>
            <person name="Wu H.C."/>
            <person name="Kim C.J."/>
            <person name="Nguyen M."/>
            <person name="Pham P.K."/>
            <person name="Cheuk R.F."/>
            <person name="Karlin-Newmann G."/>
            <person name="Liu S.X."/>
            <person name="Lam B."/>
            <person name="Sakano H."/>
            <person name="Wu T."/>
            <person name="Yu G."/>
            <person name="Miranda M."/>
            <person name="Quach H.L."/>
            <person name="Tripp M."/>
            <person name="Chang C.H."/>
            <person name="Lee J.M."/>
            <person name="Toriumi M.J."/>
            <person name="Chan M.M."/>
            <person name="Tang C.C."/>
            <person name="Onodera C.S."/>
            <person name="Deng J.M."/>
            <person name="Akiyama K."/>
            <person name="Ansari Y."/>
            <person name="Arakawa T."/>
            <person name="Banh J."/>
            <person name="Banno F."/>
            <person name="Bowser L."/>
            <person name="Brooks S.Y."/>
            <person name="Carninci P."/>
            <person name="Chao Q."/>
            <person name="Choy N."/>
            <person name="Enju A."/>
            <person name="Goldsmith A.D."/>
            <person name="Gurjal M."/>
            <person name="Hansen N.F."/>
            <person name="Hayashizaki Y."/>
            <person name="Johnson-Hopson C."/>
            <person name="Hsuan V.W."/>
            <person name="Iida K."/>
            <person name="Karnes M."/>
            <person name="Khan S."/>
            <person name="Koesema E."/>
            <person name="Ishida J."/>
            <person name="Jiang P.X."/>
            <person name="Jones T."/>
            <person name="Kawai J."/>
            <person name="Kamiya A."/>
            <person name="Meyers C."/>
            <person name="Nakajima M."/>
            <person name="Narusaka M."/>
            <person name="Seki M."/>
            <person name="Sakurai T."/>
            <person name="Satou M."/>
            <person name="Tamse R."/>
            <person name="Vaysberg M."/>
            <person name="Wallender E.K."/>
            <person name="Wong C."/>
            <person name="Yamamura Y."/>
            <person name="Yuan S."/>
            <person name="Shinozaki K."/>
            <person name="Davis R.W."/>
            <person name="Theologis A."/>
            <person name="Ecker J.R."/>
        </authorList>
    </citation>
    <scope>NUCLEOTIDE SEQUENCE [LARGE SCALE MRNA]</scope>
    <source>
        <strain>cv. Columbia</strain>
    </source>
</reference>
<reference key="4">
    <citation type="submission" date="2002-03" db="EMBL/GenBank/DDBJ databases">
        <title>Full-length cDNA from Arabidopsis thaliana.</title>
        <authorList>
            <person name="Brover V.V."/>
            <person name="Troukhan M.E."/>
            <person name="Alexandrov N.A."/>
            <person name="Lu Y.-P."/>
            <person name="Flavell R.B."/>
            <person name="Feldmann K.A."/>
        </authorList>
    </citation>
    <scope>NUCLEOTIDE SEQUENCE [LARGE SCALE MRNA]</scope>
</reference>
<reference key="5">
    <citation type="journal article" date="2003" name="DNA Res.">
        <title>Comprehensive analysis of NAC family genes in Oryza sativa and Arabidopsis thaliana.</title>
        <authorList>
            <person name="Ooka H."/>
            <person name="Satoh K."/>
            <person name="Doi K."/>
            <person name="Nagata T."/>
            <person name="Otomo Y."/>
            <person name="Murakami K."/>
            <person name="Matsubara K."/>
            <person name="Osato N."/>
            <person name="Kawai J."/>
            <person name="Carninci P."/>
            <person name="Hayashizaki Y."/>
            <person name="Suzuki K."/>
            <person name="Kojima K."/>
            <person name="Takahara Y."/>
            <person name="Yamamoto K."/>
            <person name="Kikuchi S."/>
        </authorList>
    </citation>
    <scope>GENE FAMILY</scope>
    <scope>NOMENCLATURE</scope>
</reference>
<reference key="6">
    <citation type="journal article" date="2004" name="Development">
        <title>MicroRNA regulation of the CUC genes is required for boundary size control in Arabidopsis meristems.</title>
        <authorList>
            <person name="Laufs P."/>
            <person name="Peaucelle A."/>
            <person name="Morin H."/>
            <person name="Traas J."/>
        </authorList>
    </citation>
    <scope>INDUCTION BY MIR164</scope>
</reference>
<reference key="7">
    <citation type="journal article" date="2006" name="Plant Cell">
        <title>The balance between the MIR164A and CUC2 genes controls leaf margin serration in Arabidopsis.</title>
        <authorList>
            <person name="Nikovics K."/>
            <person name="Blein T."/>
            <person name="Peaucelle A."/>
            <person name="Ishida T."/>
            <person name="Morin H."/>
            <person name="Aida M."/>
            <person name="Laufs P."/>
        </authorList>
    </citation>
    <scope>INDUCTION BY MIR164</scope>
</reference>
<reference key="8">
    <citation type="journal article" date="2016" name="Sci. Rep.">
        <title>The NAC transcription factor ANAC046 is a positive regulator of chlorophyll degradation and senescence in Arabidopsis leaves.</title>
        <authorList>
            <person name="Oda-Yamamizo C."/>
            <person name="Mitsuda N."/>
            <person name="Sakamoto S."/>
            <person name="Ogawa D."/>
            <person name="Ohme-Takagi M."/>
            <person name="Ohmiya A."/>
        </authorList>
    </citation>
    <scope>FUNCTION</scope>
</reference>
<comment type="function">
    <text evidence="5">Binds to the promoter regions of genes involved in chlorophyll catabolic processes, such as NYC1, SGR1, SGR2 and PAO.</text>
</comment>
<comment type="subcellular location">
    <subcellularLocation>
        <location evidence="1">Nucleus</location>
    </subcellularLocation>
</comment>
<comment type="induction">
    <text evidence="3 4">Repressed by the microRNA miR164.</text>
</comment>
<comment type="domain">
    <text evidence="1">The NAC domain includes a DNA-binding domain and a dimerization domain.</text>
</comment>
<comment type="sequence caution" evidence="7">
    <conflict type="erroneous initiation">
        <sequence resource="EMBL-CDS" id="AAM61656"/>
    </conflict>
    <text>Truncated N-terminus.</text>
</comment>
<keyword id="KW-0238">DNA-binding</keyword>
<keyword id="KW-0539">Nucleus</keyword>
<keyword id="KW-1185">Reference proteome</keyword>
<keyword id="KW-0804">Transcription</keyword>
<keyword id="KW-0805">Transcription regulation</keyword>
<sequence>METFCGFQKEEEQMDLPPGFRFHPTDEELITHYLHKKVLDTSFSAKAIGEVDLNKSEPWELPWMAKMGEKEWYFFCVRDRKYPTGLRTNRATEAGYWKATGKDKEIYRGKSLVGMKKTLVFYRGRAPKGQKTNWVMHEYRLEGKFSAHNLPKTAKNEWVICRVFQKSAGGKKIPISSLIRIGSLGTDFNPSLLPSLTDSSPYNDKTKTEPVYVPCFSNQTDQNQGTTLNCFSSPVLNSIQADIFHRIPLYQTQSLQVSMNLQSPVLTQEHSVLHAMIENNRRQSLKTMSVSQETGVSTDMNTDISSDFEFGKRRFDSQEDPSSSTGPVDLEPFWNY</sequence>
<gene>
    <name evidence="9" type="primary">NAC100</name>
    <name evidence="8" type="ordered locus">At5g61430</name>
    <name evidence="10" type="ORF">MFB13.6</name>
</gene>
<feature type="chain" id="PRO_0000407578" description="NAC domain-containing protein 100">
    <location>
        <begin position="1"/>
        <end position="336"/>
    </location>
</feature>
<feature type="domain" description="NAC" evidence="1">
    <location>
        <begin position="16"/>
        <end position="166"/>
    </location>
</feature>
<feature type="DNA-binding region" evidence="1">
    <location>
        <begin position="113"/>
        <end position="172"/>
    </location>
</feature>
<feature type="region of interest" description="Disordered" evidence="2">
    <location>
        <begin position="313"/>
        <end position="336"/>
    </location>
</feature>
<proteinExistence type="evidence at transcript level"/>
<organism>
    <name type="scientific">Arabidopsis thaliana</name>
    <name type="common">Mouse-ear cress</name>
    <dbReference type="NCBI Taxonomy" id="3702"/>
    <lineage>
        <taxon>Eukaryota</taxon>
        <taxon>Viridiplantae</taxon>
        <taxon>Streptophyta</taxon>
        <taxon>Embryophyta</taxon>
        <taxon>Tracheophyta</taxon>
        <taxon>Spermatophyta</taxon>
        <taxon>Magnoliopsida</taxon>
        <taxon>eudicotyledons</taxon>
        <taxon>Gunneridae</taxon>
        <taxon>Pentapetalae</taxon>
        <taxon>rosids</taxon>
        <taxon>malvids</taxon>
        <taxon>Brassicales</taxon>
        <taxon>Brassicaceae</taxon>
        <taxon>Camelineae</taxon>
        <taxon>Arabidopsis</taxon>
    </lineage>
</organism>
<evidence type="ECO:0000255" key="1">
    <source>
        <dbReference type="PROSITE-ProRule" id="PRU00353"/>
    </source>
</evidence>
<evidence type="ECO:0000256" key="2">
    <source>
        <dbReference type="SAM" id="MobiDB-lite"/>
    </source>
</evidence>
<evidence type="ECO:0000269" key="3">
    <source>
    </source>
</evidence>
<evidence type="ECO:0000269" key="4">
    <source>
    </source>
</evidence>
<evidence type="ECO:0000269" key="5">
    <source>
    </source>
</evidence>
<evidence type="ECO:0000303" key="6">
    <source>
    </source>
</evidence>
<evidence type="ECO:0000305" key="7"/>
<evidence type="ECO:0000312" key="8">
    <source>
        <dbReference type="Araport" id="AT5G61430"/>
    </source>
</evidence>
<evidence type="ECO:0000312" key="9">
    <source>
        <dbReference type="EMBL" id="AED97468.1"/>
    </source>
</evidence>
<evidence type="ECO:0000312" key="10">
    <source>
        <dbReference type="EMBL" id="BAB08499.1"/>
    </source>
</evidence>
<name>NC100_ARATH</name>
<dbReference type="EMBL" id="AB010073">
    <property type="protein sequence ID" value="BAB08499.1"/>
    <property type="molecule type" value="Genomic_DNA"/>
</dbReference>
<dbReference type="EMBL" id="CP002688">
    <property type="protein sequence ID" value="AED97468.1"/>
    <property type="molecule type" value="Genomic_DNA"/>
</dbReference>
<dbReference type="EMBL" id="AY054644">
    <property type="protein sequence ID" value="AAK96835.1"/>
    <property type="molecule type" value="mRNA"/>
</dbReference>
<dbReference type="EMBL" id="AY081496">
    <property type="protein sequence ID" value="AAM10058.1"/>
    <property type="molecule type" value="mRNA"/>
</dbReference>
<dbReference type="EMBL" id="AY085102">
    <property type="protein sequence ID" value="AAM61656.1"/>
    <property type="status" value="ALT_INIT"/>
    <property type="molecule type" value="mRNA"/>
</dbReference>
<dbReference type="RefSeq" id="NP_200951.1">
    <property type="nucleotide sequence ID" value="NM_125536.4"/>
</dbReference>
<dbReference type="SMR" id="Q9FLJ2"/>
<dbReference type="FunCoup" id="Q9FLJ2">
    <property type="interactions" value="37"/>
</dbReference>
<dbReference type="IntAct" id="Q9FLJ2">
    <property type="interactions" value="1"/>
</dbReference>
<dbReference type="STRING" id="3702.Q9FLJ2"/>
<dbReference type="PaxDb" id="3702-AT5G61430.1"/>
<dbReference type="ProteomicsDB" id="251316"/>
<dbReference type="DNASU" id="836264"/>
<dbReference type="EnsemblPlants" id="AT5G61430.1">
    <property type="protein sequence ID" value="AT5G61430.1"/>
    <property type="gene ID" value="AT5G61430"/>
</dbReference>
<dbReference type="GeneID" id="836264"/>
<dbReference type="Gramene" id="AT5G61430.1">
    <property type="protein sequence ID" value="AT5G61430.1"/>
    <property type="gene ID" value="AT5G61430"/>
</dbReference>
<dbReference type="KEGG" id="ath:AT5G61430"/>
<dbReference type="Araport" id="AT5G61430"/>
<dbReference type="TAIR" id="AT5G61430">
    <property type="gene designation" value="NAC100"/>
</dbReference>
<dbReference type="eggNOG" id="ENOG502QR2M">
    <property type="taxonomic scope" value="Eukaryota"/>
</dbReference>
<dbReference type="HOGENOM" id="CLU_035664_6_1_1"/>
<dbReference type="InParanoid" id="Q9FLJ2"/>
<dbReference type="OMA" id="FCGFQKE"/>
<dbReference type="PhylomeDB" id="Q9FLJ2"/>
<dbReference type="PRO" id="PR:Q9FLJ2"/>
<dbReference type="Proteomes" id="UP000006548">
    <property type="component" value="Chromosome 5"/>
</dbReference>
<dbReference type="ExpressionAtlas" id="Q9FLJ2">
    <property type="expression patterns" value="baseline and differential"/>
</dbReference>
<dbReference type="GO" id="GO:0005634">
    <property type="term" value="C:nucleus"/>
    <property type="evidence" value="ECO:0007669"/>
    <property type="project" value="UniProtKB-SubCell"/>
</dbReference>
<dbReference type="GO" id="GO:0003677">
    <property type="term" value="F:DNA binding"/>
    <property type="evidence" value="ECO:0007669"/>
    <property type="project" value="UniProtKB-KW"/>
</dbReference>
<dbReference type="GO" id="GO:0003700">
    <property type="term" value="F:DNA-binding transcription factor activity"/>
    <property type="evidence" value="ECO:0000250"/>
    <property type="project" value="TAIR"/>
</dbReference>
<dbReference type="FunFam" id="2.170.150.80:FF:000006">
    <property type="entry name" value="NAC domain-containing protein 100-like"/>
    <property type="match status" value="1"/>
</dbReference>
<dbReference type="Gene3D" id="2.170.150.80">
    <property type="entry name" value="NAC domain"/>
    <property type="match status" value="1"/>
</dbReference>
<dbReference type="InterPro" id="IPR003441">
    <property type="entry name" value="NAC-dom"/>
</dbReference>
<dbReference type="InterPro" id="IPR036093">
    <property type="entry name" value="NAC_dom_sf"/>
</dbReference>
<dbReference type="PANTHER" id="PTHR31744:SF104">
    <property type="entry name" value="NAC DOMAIN-CONTAINING PROTEIN 100"/>
    <property type="match status" value="1"/>
</dbReference>
<dbReference type="PANTHER" id="PTHR31744">
    <property type="entry name" value="PROTEIN CUP-SHAPED COTYLEDON 2-RELATED"/>
    <property type="match status" value="1"/>
</dbReference>
<dbReference type="Pfam" id="PF02365">
    <property type="entry name" value="NAM"/>
    <property type="match status" value="1"/>
</dbReference>
<dbReference type="SUPFAM" id="SSF101941">
    <property type="entry name" value="NAC domain"/>
    <property type="match status" value="1"/>
</dbReference>
<dbReference type="PROSITE" id="PS51005">
    <property type="entry name" value="NAC"/>
    <property type="match status" value="1"/>
</dbReference>